<keyword id="KW-0687">Ribonucleoprotein</keyword>
<keyword id="KW-0689">Ribosomal protein</keyword>
<comment type="subunit">
    <text evidence="1">Part of the 50S ribosomal subunit. Contacts protein L32.</text>
</comment>
<comment type="similarity">
    <text evidence="1">Belongs to the bacterial ribosomal protein bL17 family.</text>
</comment>
<feature type="chain" id="PRO_0000267965" description="Large ribosomal subunit protein bL17">
    <location>
        <begin position="1"/>
        <end position="126"/>
    </location>
</feature>
<proteinExistence type="inferred from homology"/>
<protein>
    <recommendedName>
        <fullName evidence="1">Large ribosomal subunit protein bL17</fullName>
    </recommendedName>
    <alternativeName>
        <fullName evidence="2">50S ribosomal protein L17</fullName>
    </alternativeName>
</protein>
<dbReference type="EMBL" id="BA000031">
    <property type="protein sequence ID" value="BAC58546.1"/>
    <property type="molecule type" value="Genomic_DNA"/>
</dbReference>
<dbReference type="RefSeq" id="NP_796662.1">
    <property type="nucleotide sequence ID" value="NC_004603.1"/>
</dbReference>
<dbReference type="RefSeq" id="WP_005383141.1">
    <property type="nucleotide sequence ID" value="NC_004603.1"/>
</dbReference>
<dbReference type="SMR" id="Q87SY9"/>
<dbReference type="GeneID" id="97171207"/>
<dbReference type="KEGG" id="vpa:VP0283"/>
<dbReference type="PATRIC" id="fig|223926.6.peg.274"/>
<dbReference type="eggNOG" id="COG0203">
    <property type="taxonomic scope" value="Bacteria"/>
</dbReference>
<dbReference type="HOGENOM" id="CLU_074407_2_0_6"/>
<dbReference type="PRO" id="PR:Q87SY9"/>
<dbReference type="Proteomes" id="UP000002493">
    <property type="component" value="Chromosome 1"/>
</dbReference>
<dbReference type="GO" id="GO:0022625">
    <property type="term" value="C:cytosolic large ribosomal subunit"/>
    <property type="evidence" value="ECO:0007669"/>
    <property type="project" value="TreeGrafter"/>
</dbReference>
<dbReference type="GO" id="GO:0003735">
    <property type="term" value="F:structural constituent of ribosome"/>
    <property type="evidence" value="ECO:0007669"/>
    <property type="project" value="InterPro"/>
</dbReference>
<dbReference type="GO" id="GO:0006412">
    <property type="term" value="P:translation"/>
    <property type="evidence" value="ECO:0007669"/>
    <property type="project" value="UniProtKB-UniRule"/>
</dbReference>
<dbReference type="FunFam" id="3.90.1030.10:FF:000001">
    <property type="entry name" value="50S ribosomal protein L17"/>
    <property type="match status" value="1"/>
</dbReference>
<dbReference type="Gene3D" id="3.90.1030.10">
    <property type="entry name" value="Ribosomal protein L17"/>
    <property type="match status" value="1"/>
</dbReference>
<dbReference type="HAMAP" id="MF_01368">
    <property type="entry name" value="Ribosomal_bL17"/>
    <property type="match status" value="1"/>
</dbReference>
<dbReference type="InterPro" id="IPR000456">
    <property type="entry name" value="Ribosomal_bL17"/>
</dbReference>
<dbReference type="InterPro" id="IPR047859">
    <property type="entry name" value="Ribosomal_bL17_CS"/>
</dbReference>
<dbReference type="InterPro" id="IPR036373">
    <property type="entry name" value="Ribosomal_bL17_sf"/>
</dbReference>
<dbReference type="NCBIfam" id="TIGR00059">
    <property type="entry name" value="L17"/>
    <property type="match status" value="1"/>
</dbReference>
<dbReference type="PANTHER" id="PTHR14413:SF16">
    <property type="entry name" value="LARGE RIBOSOMAL SUBUNIT PROTEIN BL17M"/>
    <property type="match status" value="1"/>
</dbReference>
<dbReference type="PANTHER" id="PTHR14413">
    <property type="entry name" value="RIBOSOMAL PROTEIN L17"/>
    <property type="match status" value="1"/>
</dbReference>
<dbReference type="Pfam" id="PF01196">
    <property type="entry name" value="Ribosomal_L17"/>
    <property type="match status" value="1"/>
</dbReference>
<dbReference type="SUPFAM" id="SSF64263">
    <property type="entry name" value="Prokaryotic ribosomal protein L17"/>
    <property type="match status" value="1"/>
</dbReference>
<dbReference type="PROSITE" id="PS01167">
    <property type="entry name" value="RIBOSOMAL_L17"/>
    <property type="match status" value="1"/>
</dbReference>
<organism>
    <name type="scientific">Vibrio parahaemolyticus serotype O3:K6 (strain RIMD 2210633)</name>
    <dbReference type="NCBI Taxonomy" id="223926"/>
    <lineage>
        <taxon>Bacteria</taxon>
        <taxon>Pseudomonadati</taxon>
        <taxon>Pseudomonadota</taxon>
        <taxon>Gammaproteobacteria</taxon>
        <taxon>Vibrionales</taxon>
        <taxon>Vibrionaceae</taxon>
        <taxon>Vibrio</taxon>
    </lineage>
</organism>
<accession>Q87SY9</accession>
<sequence length="126" mass="14202">MRHRKSGRQLNRNSSHRKAMFSNMASSLVRHEVIKTTLPKAKELRRVVEPLITLAKTDSVANRRLAFARTRDNEVVAKLFNELGPRFAARQGGYTRILKAGFRAGDKAPMAYIELVDRPAAEEAAE</sequence>
<reference key="1">
    <citation type="journal article" date="2003" name="Lancet">
        <title>Genome sequence of Vibrio parahaemolyticus: a pathogenic mechanism distinct from that of V. cholerae.</title>
        <authorList>
            <person name="Makino K."/>
            <person name="Oshima K."/>
            <person name="Kurokawa K."/>
            <person name="Yokoyama K."/>
            <person name="Uda T."/>
            <person name="Tagomori K."/>
            <person name="Iijima Y."/>
            <person name="Najima M."/>
            <person name="Nakano M."/>
            <person name="Yamashita A."/>
            <person name="Kubota Y."/>
            <person name="Kimura S."/>
            <person name="Yasunaga T."/>
            <person name="Honda T."/>
            <person name="Shinagawa H."/>
            <person name="Hattori M."/>
            <person name="Iida T."/>
        </authorList>
    </citation>
    <scope>NUCLEOTIDE SEQUENCE [LARGE SCALE GENOMIC DNA]</scope>
    <source>
        <strain>RIMD 2210633</strain>
    </source>
</reference>
<evidence type="ECO:0000255" key="1">
    <source>
        <dbReference type="HAMAP-Rule" id="MF_01368"/>
    </source>
</evidence>
<evidence type="ECO:0000305" key="2"/>
<gene>
    <name evidence="1" type="primary">rplQ</name>
    <name type="ordered locus">VP0283</name>
</gene>
<name>RL17_VIBPA</name>